<evidence type="ECO:0000250" key="1"/>
<evidence type="ECO:0000255" key="2">
    <source>
        <dbReference type="PROSITE-ProRule" id="PRU10009"/>
    </source>
</evidence>
<evidence type="ECO:0000305" key="3"/>
<keyword id="KW-0963">Cytoplasm</keyword>
<keyword id="KW-0324">Glycolysis</keyword>
<keyword id="KW-0520">NAD</keyword>
<keyword id="KW-0560">Oxidoreductase</keyword>
<organism>
    <name type="scientific">Agaricus bisporus</name>
    <name type="common">White button mushroom</name>
    <dbReference type="NCBI Taxonomy" id="5341"/>
    <lineage>
        <taxon>Eukaryota</taxon>
        <taxon>Fungi</taxon>
        <taxon>Dikarya</taxon>
        <taxon>Basidiomycota</taxon>
        <taxon>Agaricomycotina</taxon>
        <taxon>Agaricomycetes</taxon>
        <taxon>Agaricomycetidae</taxon>
        <taxon>Agaricales</taxon>
        <taxon>Agaricineae</taxon>
        <taxon>Agaricaceae</taxon>
        <taxon>Agaricus</taxon>
    </lineage>
</organism>
<feature type="chain" id="PRO_0000145533" description="Glyceraldehyde-3-phosphate dehydrogenase 1">
    <location>
        <begin position="1"/>
        <end position="337"/>
    </location>
</feature>
<feature type="active site" description="Nucleophile" evidence="2">
    <location>
        <position position="150"/>
    </location>
</feature>
<feature type="binding site" evidence="1">
    <location>
        <begin position="11"/>
        <end position="12"/>
    </location>
    <ligand>
        <name>NAD(+)</name>
        <dbReference type="ChEBI" id="CHEBI:57540"/>
    </ligand>
</feature>
<feature type="binding site" evidence="1">
    <location>
        <position position="33"/>
    </location>
    <ligand>
        <name>NAD(+)</name>
        <dbReference type="ChEBI" id="CHEBI:57540"/>
    </ligand>
</feature>
<feature type="binding site" evidence="1">
    <location>
        <position position="78"/>
    </location>
    <ligand>
        <name>NAD(+)</name>
        <dbReference type="ChEBI" id="CHEBI:57540"/>
    </ligand>
</feature>
<feature type="binding site" evidence="1">
    <location>
        <begin position="149"/>
        <end position="151"/>
    </location>
    <ligand>
        <name>D-glyceraldehyde 3-phosphate</name>
        <dbReference type="ChEBI" id="CHEBI:59776"/>
    </ligand>
</feature>
<feature type="binding site" evidence="1">
    <location>
        <position position="180"/>
    </location>
    <ligand>
        <name>D-glyceraldehyde 3-phosphate</name>
        <dbReference type="ChEBI" id="CHEBI:59776"/>
    </ligand>
</feature>
<feature type="binding site" evidence="1">
    <location>
        <begin position="209"/>
        <end position="210"/>
    </location>
    <ligand>
        <name>D-glyceraldehyde 3-phosphate</name>
        <dbReference type="ChEBI" id="CHEBI:59776"/>
    </ligand>
</feature>
<feature type="binding site" evidence="1">
    <location>
        <position position="232"/>
    </location>
    <ligand>
        <name>D-glyceraldehyde 3-phosphate</name>
        <dbReference type="ChEBI" id="CHEBI:59776"/>
    </ligand>
</feature>
<feature type="binding site" evidence="1">
    <location>
        <position position="318"/>
    </location>
    <ligand>
        <name>NAD(+)</name>
        <dbReference type="ChEBI" id="CHEBI:57540"/>
    </ligand>
</feature>
<feature type="site" description="Activates thiol group during catalysis" evidence="1">
    <location>
        <position position="177"/>
    </location>
</feature>
<gene>
    <name type="primary">gpd1</name>
</gene>
<protein>
    <recommendedName>
        <fullName>Glyceraldehyde-3-phosphate dehydrogenase 1</fullName>
        <shortName>GAPDH 1</shortName>
        <ecNumber>1.2.1.12</ecNumber>
    </recommendedName>
</protein>
<name>G3P1_AGABI</name>
<comment type="catalytic activity">
    <reaction evidence="2">
        <text>D-glyceraldehyde 3-phosphate + phosphate + NAD(+) = (2R)-3-phospho-glyceroyl phosphate + NADH + H(+)</text>
        <dbReference type="Rhea" id="RHEA:10300"/>
        <dbReference type="ChEBI" id="CHEBI:15378"/>
        <dbReference type="ChEBI" id="CHEBI:43474"/>
        <dbReference type="ChEBI" id="CHEBI:57540"/>
        <dbReference type="ChEBI" id="CHEBI:57604"/>
        <dbReference type="ChEBI" id="CHEBI:57945"/>
        <dbReference type="ChEBI" id="CHEBI:59776"/>
        <dbReference type="EC" id="1.2.1.12"/>
    </reaction>
</comment>
<comment type="pathway">
    <text>Carbohydrate degradation; glycolysis; pyruvate from D-glyceraldehyde 3-phosphate: step 1/5.</text>
</comment>
<comment type="subunit">
    <text>Homotetramer.</text>
</comment>
<comment type="subcellular location">
    <subcellularLocation>
        <location>Cytoplasm</location>
    </subcellularLocation>
</comment>
<comment type="similarity">
    <text evidence="3">Belongs to the glyceraldehyde-3-phosphate dehydrogenase family.</text>
</comment>
<accession>P32635</accession>
<reference key="1">
    <citation type="journal article" date="1992" name="Curr. Genet.">
        <title>Sequence analysis of the glyceraldehyde-3-phosphate dehydrogenase genes from the basidiomycetes Schizophyllum commune, Phanerochaete chrysosporium and Agaricus bisporus.</title>
        <authorList>
            <person name="Harmsen M.C."/>
            <person name="Schuren F.H.J."/>
            <person name="Moukha S.M."/>
            <person name="van Zuilen C.M."/>
            <person name="Punt P.J."/>
            <person name="Wessels J.G.H."/>
        </authorList>
    </citation>
    <scope>NUCLEOTIDE SEQUENCE [GENOMIC DNA]</scope>
    <source>
        <strain>Horst U3</strain>
    </source>
</reference>
<dbReference type="EC" id="1.2.1.12"/>
<dbReference type="EMBL" id="M81727">
    <property type="protein sequence ID" value="AAA32633.1"/>
    <property type="molecule type" value="Genomic_DNA"/>
</dbReference>
<dbReference type="PIR" id="S26975">
    <property type="entry name" value="S26975"/>
</dbReference>
<dbReference type="SMR" id="P32635"/>
<dbReference type="UniPathway" id="UPA00109">
    <property type="reaction ID" value="UER00184"/>
</dbReference>
<dbReference type="GO" id="GO:0005829">
    <property type="term" value="C:cytosol"/>
    <property type="evidence" value="ECO:0007669"/>
    <property type="project" value="TreeGrafter"/>
</dbReference>
<dbReference type="GO" id="GO:0004365">
    <property type="term" value="F:glyceraldehyde-3-phosphate dehydrogenase (NAD+) (phosphorylating) activity"/>
    <property type="evidence" value="ECO:0007669"/>
    <property type="project" value="UniProtKB-EC"/>
</dbReference>
<dbReference type="GO" id="GO:0051287">
    <property type="term" value="F:NAD binding"/>
    <property type="evidence" value="ECO:0007669"/>
    <property type="project" value="InterPro"/>
</dbReference>
<dbReference type="GO" id="GO:0050661">
    <property type="term" value="F:NADP binding"/>
    <property type="evidence" value="ECO:0007669"/>
    <property type="project" value="InterPro"/>
</dbReference>
<dbReference type="GO" id="GO:0006006">
    <property type="term" value="P:glucose metabolic process"/>
    <property type="evidence" value="ECO:0007669"/>
    <property type="project" value="InterPro"/>
</dbReference>
<dbReference type="GO" id="GO:0006096">
    <property type="term" value="P:glycolytic process"/>
    <property type="evidence" value="ECO:0007669"/>
    <property type="project" value="UniProtKB-UniPathway"/>
</dbReference>
<dbReference type="CDD" id="cd18126">
    <property type="entry name" value="GAPDH_I_C"/>
    <property type="match status" value="1"/>
</dbReference>
<dbReference type="CDD" id="cd05214">
    <property type="entry name" value="GAPDH_I_N"/>
    <property type="match status" value="1"/>
</dbReference>
<dbReference type="FunFam" id="3.30.360.10:FF:000001">
    <property type="entry name" value="Glyceraldehyde-3-phosphate dehydrogenase"/>
    <property type="match status" value="1"/>
</dbReference>
<dbReference type="FunFam" id="3.40.50.720:FF:000020">
    <property type="entry name" value="Glyceraldehyde-3-phosphate dehydrogenase"/>
    <property type="match status" value="1"/>
</dbReference>
<dbReference type="Gene3D" id="3.30.360.10">
    <property type="entry name" value="Dihydrodipicolinate Reductase, domain 2"/>
    <property type="match status" value="1"/>
</dbReference>
<dbReference type="Gene3D" id="3.40.50.720">
    <property type="entry name" value="NAD(P)-binding Rossmann-like Domain"/>
    <property type="match status" value="1"/>
</dbReference>
<dbReference type="InterPro" id="IPR020831">
    <property type="entry name" value="GlycerAld/Erythrose_P_DH"/>
</dbReference>
<dbReference type="InterPro" id="IPR020830">
    <property type="entry name" value="GlycerAld_3-P_DH_AS"/>
</dbReference>
<dbReference type="InterPro" id="IPR020829">
    <property type="entry name" value="GlycerAld_3-P_DH_cat"/>
</dbReference>
<dbReference type="InterPro" id="IPR020828">
    <property type="entry name" value="GlycerAld_3-P_DH_NAD(P)-bd"/>
</dbReference>
<dbReference type="InterPro" id="IPR006424">
    <property type="entry name" value="Glyceraldehyde-3-P_DH_1"/>
</dbReference>
<dbReference type="InterPro" id="IPR036291">
    <property type="entry name" value="NAD(P)-bd_dom_sf"/>
</dbReference>
<dbReference type="NCBIfam" id="TIGR01534">
    <property type="entry name" value="GAPDH-I"/>
    <property type="match status" value="1"/>
</dbReference>
<dbReference type="PANTHER" id="PTHR10836">
    <property type="entry name" value="GLYCERALDEHYDE 3-PHOSPHATE DEHYDROGENASE"/>
    <property type="match status" value="1"/>
</dbReference>
<dbReference type="PANTHER" id="PTHR10836:SF76">
    <property type="entry name" value="GLYCERALDEHYDE-3-PHOSPHATE DEHYDROGENASE-RELATED"/>
    <property type="match status" value="1"/>
</dbReference>
<dbReference type="Pfam" id="PF02800">
    <property type="entry name" value="Gp_dh_C"/>
    <property type="match status" value="1"/>
</dbReference>
<dbReference type="Pfam" id="PF00044">
    <property type="entry name" value="Gp_dh_N"/>
    <property type="match status" value="1"/>
</dbReference>
<dbReference type="PIRSF" id="PIRSF000149">
    <property type="entry name" value="GAP_DH"/>
    <property type="match status" value="1"/>
</dbReference>
<dbReference type="PRINTS" id="PR00078">
    <property type="entry name" value="G3PDHDRGNASE"/>
</dbReference>
<dbReference type="SMART" id="SM00846">
    <property type="entry name" value="Gp_dh_N"/>
    <property type="match status" value="1"/>
</dbReference>
<dbReference type="SUPFAM" id="SSF55347">
    <property type="entry name" value="Glyceraldehyde-3-phosphate dehydrogenase-like, C-terminal domain"/>
    <property type="match status" value="1"/>
</dbReference>
<dbReference type="SUPFAM" id="SSF51735">
    <property type="entry name" value="NAD(P)-binding Rossmann-fold domains"/>
    <property type="match status" value="1"/>
</dbReference>
<dbReference type="PROSITE" id="PS00071">
    <property type="entry name" value="GAPDH"/>
    <property type="match status" value="1"/>
</dbReference>
<proteinExistence type="inferred from homology"/>
<sequence>MVNVGINGFGRIGRLVLRNALQMQILTVVAVNDPFLDVEYMAYLFKYDSVHGRYQGKVETKDGKLIIDGHKIAAFAEREPANIKWADCGAEYIVESTGVFKTEELAKEHLKGGAKKVVITAPGSGVPTYVVGVNLDKYDPKEVVISNASCTTNCLAVLAKVINDKFGIVEGLMTTVHATTATQKTVDAPAKKDWRSGRSVTNNIIPASTGAAKAVTKAIPDLEGKLTGLAFRVPTLDVSVVDLVVRLEKETSYDDVKKAMRDAADGKHPGIEKGIVDYTEEDVVSTDFVGSNYSMIFDAKAGIALNSRFMKLVAWYDNEWGYARRVCDEVVYVAKKN</sequence>